<keyword id="KW-0029">Amino-acid transport</keyword>
<keyword id="KW-0997">Cell inner membrane</keyword>
<keyword id="KW-1003">Cell membrane</keyword>
<keyword id="KW-0472">Membrane</keyword>
<keyword id="KW-0769">Symport</keyword>
<keyword id="KW-0812">Transmembrane</keyword>
<keyword id="KW-1133">Transmembrane helix</keyword>
<keyword id="KW-0813">Transport</keyword>
<name>SSTT_SHIF8</name>
<evidence type="ECO:0000255" key="1">
    <source>
        <dbReference type="HAMAP-Rule" id="MF_01582"/>
    </source>
</evidence>
<gene>
    <name evidence="1" type="primary">sstT</name>
    <name type="ordered locus">SFV_3130</name>
</gene>
<comment type="function">
    <text evidence="1">Involved in the import of serine and threonine into the cell, with the concomitant import of sodium (symport system).</text>
</comment>
<comment type="catalytic activity">
    <reaction evidence="1">
        <text>L-serine(in) + Na(+)(in) = L-serine(out) + Na(+)(out)</text>
        <dbReference type="Rhea" id="RHEA:29575"/>
        <dbReference type="ChEBI" id="CHEBI:29101"/>
        <dbReference type="ChEBI" id="CHEBI:33384"/>
    </reaction>
    <physiologicalReaction direction="right-to-left" evidence="1">
        <dbReference type="Rhea" id="RHEA:29577"/>
    </physiologicalReaction>
</comment>
<comment type="catalytic activity">
    <reaction evidence="1">
        <text>L-threonine(in) + Na(+)(in) = L-threonine(out) + Na(+)(out)</text>
        <dbReference type="Rhea" id="RHEA:69999"/>
        <dbReference type="ChEBI" id="CHEBI:29101"/>
        <dbReference type="ChEBI" id="CHEBI:57926"/>
    </reaction>
    <physiologicalReaction direction="right-to-left" evidence="1">
        <dbReference type="Rhea" id="RHEA:70001"/>
    </physiologicalReaction>
</comment>
<comment type="subcellular location">
    <subcellularLocation>
        <location evidence="1">Cell inner membrane</location>
        <topology evidence="1">Multi-pass membrane protein</topology>
    </subcellularLocation>
</comment>
<comment type="similarity">
    <text evidence="1">Belongs to the dicarboxylate/amino acid:cation symporter (DAACS) (TC 2.A.23) family.</text>
</comment>
<feature type="initiator methionine" description="Removed" evidence="1">
    <location>
        <position position="1"/>
    </location>
</feature>
<feature type="chain" id="PRO_0000309132" description="Serine/threonine transporter SstT">
    <location>
        <begin position="2"/>
        <end position="414"/>
    </location>
</feature>
<feature type="topological domain" description="Cytoplasmic" evidence="1">
    <location>
        <begin position="2"/>
        <end position="15"/>
    </location>
</feature>
<feature type="transmembrane region" description="Helical" evidence="1">
    <location>
        <begin position="16"/>
        <end position="36"/>
    </location>
</feature>
<feature type="topological domain" description="Periplasmic" evidence="1">
    <location>
        <begin position="37"/>
        <end position="45"/>
    </location>
</feature>
<feature type="transmembrane region" description="Helical" evidence="1">
    <location>
        <begin position="46"/>
        <end position="66"/>
    </location>
</feature>
<feature type="topological domain" description="Cytoplasmic" evidence="1">
    <location>
        <begin position="67"/>
        <end position="83"/>
    </location>
</feature>
<feature type="transmembrane region" description="Helical" evidence="1">
    <location>
        <begin position="84"/>
        <end position="104"/>
    </location>
</feature>
<feature type="topological domain" description="Periplasmic" evidence="1">
    <location>
        <begin position="105"/>
        <end position="142"/>
    </location>
</feature>
<feature type="transmembrane region" description="Helical" evidence="1">
    <location>
        <begin position="143"/>
        <end position="163"/>
    </location>
</feature>
<feature type="topological domain" description="Cytoplasmic" evidence="1">
    <location>
        <begin position="164"/>
        <end position="179"/>
    </location>
</feature>
<feature type="transmembrane region" description="Helical" evidence="1">
    <location>
        <begin position="180"/>
        <end position="200"/>
    </location>
</feature>
<feature type="topological domain" description="Periplasmic" evidence="1">
    <location>
        <begin position="201"/>
        <end position="217"/>
    </location>
</feature>
<feature type="transmembrane region" description="Helical" evidence="1">
    <location>
        <begin position="218"/>
        <end position="238"/>
    </location>
</feature>
<feature type="topological domain" description="Cytoplasmic" evidence="1">
    <location>
        <begin position="239"/>
        <end position="299"/>
    </location>
</feature>
<feature type="transmembrane region" description="Helical" evidence="1">
    <location>
        <begin position="300"/>
        <end position="320"/>
    </location>
</feature>
<feature type="topological domain" description="Periplasmic" evidence="1">
    <location>
        <begin position="321"/>
        <end position="331"/>
    </location>
</feature>
<feature type="transmembrane region" description="Helical" evidence="1">
    <location>
        <begin position="332"/>
        <end position="352"/>
    </location>
</feature>
<feature type="topological domain" description="Cytoplasmic" evidence="1">
    <location>
        <begin position="353"/>
        <end position="414"/>
    </location>
</feature>
<accession>Q0T0H9</accession>
<proteinExistence type="inferred from homology"/>
<sequence>MTTQRSPGLFRRLAHGSLVKQILVGLVLGILLAWISKPAAEAVGLLGTLFVGALKAVAPILVLMLVMASIANHQHGQKTNIRPILFLYLLGTFSAALAAVVFSFAFPSTLHLSSSAGDISPPSGIVEVMRGLVMSMVSNPIDALLKGNYIGILVWAIGLGFALRHGNETTKNLVNDMSNAVTFMVKLVIRFAPIGIFGLVSSTLATTGFSTLWGYAQLLVVLVGCMLLVALVVNPLLVWWKIRRNPFPLVLLCLRESGVYAFFTRSSAANIPVNMALCEKLNLDRDTYSVSIPLGATINMAGAAITITVLTLAAVNTLGIPVDLPTALLLSVVASLCACGASGVAGGSLLLIPLACNMFGISNDIAMQVVAVGFIIGVLQDSCETALNSSTDVLFTAAACQAEDDRLANSALRN</sequence>
<reference key="1">
    <citation type="journal article" date="2006" name="BMC Genomics">
        <title>Complete genome sequence of Shigella flexneri 5b and comparison with Shigella flexneri 2a.</title>
        <authorList>
            <person name="Nie H."/>
            <person name="Yang F."/>
            <person name="Zhang X."/>
            <person name="Yang J."/>
            <person name="Chen L."/>
            <person name="Wang J."/>
            <person name="Xiong Z."/>
            <person name="Peng J."/>
            <person name="Sun L."/>
            <person name="Dong J."/>
            <person name="Xue Y."/>
            <person name="Xu X."/>
            <person name="Chen S."/>
            <person name="Yao Z."/>
            <person name="Shen Y."/>
            <person name="Jin Q."/>
        </authorList>
    </citation>
    <scope>NUCLEOTIDE SEQUENCE [LARGE SCALE GENOMIC DNA]</scope>
    <source>
        <strain>8401</strain>
    </source>
</reference>
<organism>
    <name type="scientific">Shigella flexneri serotype 5b (strain 8401)</name>
    <dbReference type="NCBI Taxonomy" id="373384"/>
    <lineage>
        <taxon>Bacteria</taxon>
        <taxon>Pseudomonadati</taxon>
        <taxon>Pseudomonadota</taxon>
        <taxon>Gammaproteobacteria</taxon>
        <taxon>Enterobacterales</taxon>
        <taxon>Enterobacteriaceae</taxon>
        <taxon>Shigella</taxon>
    </lineage>
</organism>
<protein>
    <recommendedName>
        <fullName evidence="1">Serine/threonine transporter SstT</fullName>
    </recommendedName>
    <alternativeName>
        <fullName evidence="1">Na(+)/serine-threonine symporter</fullName>
    </alternativeName>
</protein>
<dbReference type="EMBL" id="CP000266">
    <property type="protein sequence ID" value="ABF05186.1"/>
    <property type="molecule type" value="Genomic_DNA"/>
</dbReference>
<dbReference type="RefSeq" id="WP_000211655.1">
    <property type="nucleotide sequence ID" value="NC_008258.1"/>
</dbReference>
<dbReference type="SMR" id="Q0T0H9"/>
<dbReference type="GeneID" id="93778898"/>
<dbReference type="KEGG" id="sfv:SFV_3130"/>
<dbReference type="HOGENOM" id="CLU_044581_0_0_6"/>
<dbReference type="Proteomes" id="UP000000659">
    <property type="component" value="Chromosome"/>
</dbReference>
<dbReference type="GO" id="GO:0005886">
    <property type="term" value="C:plasma membrane"/>
    <property type="evidence" value="ECO:0007669"/>
    <property type="project" value="UniProtKB-SubCell"/>
</dbReference>
<dbReference type="GO" id="GO:0005295">
    <property type="term" value="F:neutral L-amino acid:sodium symporter activity"/>
    <property type="evidence" value="ECO:0007669"/>
    <property type="project" value="TreeGrafter"/>
</dbReference>
<dbReference type="GO" id="GO:0032329">
    <property type="term" value="P:serine transport"/>
    <property type="evidence" value="ECO:0007669"/>
    <property type="project" value="InterPro"/>
</dbReference>
<dbReference type="GO" id="GO:0015826">
    <property type="term" value="P:threonine transport"/>
    <property type="evidence" value="ECO:0007669"/>
    <property type="project" value="InterPro"/>
</dbReference>
<dbReference type="FunFam" id="1.10.3860.10:FF:000003">
    <property type="entry name" value="Serine/threonine transporter sstT"/>
    <property type="match status" value="1"/>
</dbReference>
<dbReference type="Gene3D" id="1.10.3860.10">
    <property type="entry name" value="Sodium:dicarboxylate symporter"/>
    <property type="match status" value="1"/>
</dbReference>
<dbReference type="HAMAP" id="MF_01582">
    <property type="entry name" value="Ser_Thr_transp_SstT"/>
    <property type="match status" value="1"/>
</dbReference>
<dbReference type="InterPro" id="IPR001991">
    <property type="entry name" value="Na-dicarboxylate_symporter"/>
</dbReference>
<dbReference type="InterPro" id="IPR036458">
    <property type="entry name" value="Na:dicarbo_symporter_sf"/>
</dbReference>
<dbReference type="InterPro" id="IPR023025">
    <property type="entry name" value="Ser_Thr_transp_SstT"/>
</dbReference>
<dbReference type="NCBIfam" id="NF010151">
    <property type="entry name" value="PRK13628.1"/>
    <property type="match status" value="1"/>
</dbReference>
<dbReference type="PANTHER" id="PTHR42865">
    <property type="entry name" value="PROTON/GLUTAMATE-ASPARTATE SYMPORTER"/>
    <property type="match status" value="1"/>
</dbReference>
<dbReference type="PANTHER" id="PTHR42865:SF8">
    <property type="entry name" value="SERINE_THREONINE TRANSPORTER SSTT"/>
    <property type="match status" value="1"/>
</dbReference>
<dbReference type="Pfam" id="PF00375">
    <property type="entry name" value="SDF"/>
    <property type="match status" value="1"/>
</dbReference>
<dbReference type="PRINTS" id="PR00173">
    <property type="entry name" value="EDTRNSPORT"/>
</dbReference>
<dbReference type="SUPFAM" id="SSF118215">
    <property type="entry name" value="Proton glutamate symport protein"/>
    <property type="match status" value="1"/>
</dbReference>
<dbReference type="PROSITE" id="PS00713">
    <property type="entry name" value="NA_DICARBOXYL_SYMP_1"/>
    <property type="match status" value="1"/>
</dbReference>